<gene>
    <name evidence="1" type="primary">dcd</name>
    <name type="ordered locus">APL_0835</name>
</gene>
<dbReference type="EC" id="3.5.4.13" evidence="1"/>
<dbReference type="EMBL" id="CP000569">
    <property type="protein sequence ID" value="ABN73931.1"/>
    <property type="molecule type" value="Genomic_DNA"/>
</dbReference>
<dbReference type="RefSeq" id="WP_005597311.1">
    <property type="nucleotide sequence ID" value="NC_009053.1"/>
</dbReference>
<dbReference type="SMR" id="A3N0J5"/>
<dbReference type="STRING" id="416269.APL_0835"/>
<dbReference type="EnsemblBacteria" id="ABN73931">
    <property type="protein sequence ID" value="ABN73931"/>
    <property type="gene ID" value="APL_0835"/>
</dbReference>
<dbReference type="GeneID" id="48599022"/>
<dbReference type="KEGG" id="apl:APL_0835"/>
<dbReference type="eggNOG" id="COG0717">
    <property type="taxonomic scope" value="Bacteria"/>
</dbReference>
<dbReference type="HOGENOM" id="CLU_087476_2_0_6"/>
<dbReference type="UniPathway" id="UPA00610">
    <property type="reaction ID" value="UER00665"/>
</dbReference>
<dbReference type="Proteomes" id="UP000001432">
    <property type="component" value="Chromosome"/>
</dbReference>
<dbReference type="GO" id="GO:0008829">
    <property type="term" value="F:dCTP deaminase activity"/>
    <property type="evidence" value="ECO:0007669"/>
    <property type="project" value="UniProtKB-UniRule"/>
</dbReference>
<dbReference type="GO" id="GO:0000166">
    <property type="term" value="F:nucleotide binding"/>
    <property type="evidence" value="ECO:0007669"/>
    <property type="project" value="UniProtKB-KW"/>
</dbReference>
<dbReference type="GO" id="GO:0006226">
    <property type="term" value="P:dUMP biosynthetic process"/>
    <property type="evidence" value="ECO:0007669"/>
    <property type="project" value="UniProtKB-UniPathway"/>
</dbReference>
<dbReference type="GO" id="GO:0006229">
    <property type="term" value="P:dUTP biosynthetic process"/>
    <property type="evidence" value="ECO:0007669"/>
    <property type="project" value="UniProtKB-UniRule"/>
</dbReference>
<dbReference type="GO" id="GO:0015949">
    <property type="term" value="P:nucleobase-containing small molecule interconversion"/>
    <property type="evidence" value="ECO:0007669"/>
    <property type="project" value="TreeGrafter"/>
</dbReference>
<dbReference type="CDD" id="cd07557">
    <property type="entry name" value="trimeric_dUTPase"/>
    <property type="match status" value="1"/>
</dbReference>
<dbReference type="FunFam" id="2.70.40.10:FF:000003">
    <property type="entry name" value="dCTP deaminase"/>
    <property type="match status" value="1"/>
</dbReference>
<dbReference type="Gene3D" id="2.70.40.10">
    <property type="match status" value="1"/>
</dbReference>
<dbReference type="HAMAP" id="MF_00146">
    <property type="entry name" value="dCTP_deaminase"/>
    <property type="match status" value="1"/>
</dbReference>
<dbReference type="InterPro" id="IPR011962">
    <property type="entry name" value="dCTP_deaminase"/>
</dbReference>
<dbReference type="InterPro" id="IPR036157">
    <property type="entry name" value="dUTPase-like_sf"/>
</dbReference>
<dbReference type="InterPro" id="IPR033704">
    <property type="entry name" value="dUTPase_trimeric"/>
</dbReference>
<dbReference type="NCBIfam" id="TIGR02274">
    <property type="entry name" value="dCTP_deam"/>
    <property type="match status" value="1"/>
</dbReference>
<dbReference type="PANTHER" id="PTHR42680">
    <property type="entry name" value="DCTP DEAMINASE"/>
    <property type="match status" value="1"/>
</dbReference>
<dbReference type="PANTHER" id="PTHR42680:SF3">
    <property type="entry name" value="DCTP DEAMINASE"/>
    <property type="match status" value="1"/>
</dbReference>
<dbReference type="Pfam" id="PF22769">
    <property type="entry name" value="DCD"/>
    <property type="match status" value="1"/>
</dbReference>
<dbReference type="SUPFAM" id="SSF51283">
    <property type="entry name" value="dUTPase-like"/>
    <property type="match status" value="1"/>
</dbReference>
<proteinExistence type="inferred from homology"/>
<feature type="chain" id="PRO_1000009672" description="dCTP deaminase">
    <location>
        <begin position="1"/>
        <end position="194"/>
    </location>
</feature>
<feature type="region of interest" description="Disordered" evidence="2">
    <location>
        <begin position="175"/>
        <end position="194"/>
    </location>
</feature>
<feature type="compositionally biased region" description="Polar residues" evidence="2">
    <location>
        <begin position="180"/>
        <end position="194"/>
    </location>
</feature>
<feature type="active site" description="Proton donor/acceptor" evidence="1">
    <location>
        <position position="138"/>
    </location>
</feature>
<feature type="binding site" evidence="1">
    <location>
        <begin position="110"/>
        <end position="115"/>
    </location>
    <ligand>
        <name>dCTP</name>
        <dbReference type="ChEBI" id="CHEBI:61481"/>
    </ligand>
</feature>
<feature type="binding site" evidence="1">
    <location>
        <position position="128"/>
    </location>
    <ligand>
        <name>dCTP</name>
        <dbReference type="ChEBI" id="CHEBI:61481"/>
    </ligand>
</feature>
<feature type="binding site" evidence="1">
    <location>
        <begin position="136"/>
        <end position="138"/>
    </location>
    <ligand>
        <name>dCTP</name>
        <dbReference type="ChEBI" id="CHEBI:61481"/>
    </ligand>
</feature>
<feature type="binding site" evidence="1">
    <location>
        <position position="171"/>
    </location>
    <ligand>
        <name>dCTP</name>
        <dbReference type="ChEBI" id="CHEBI:61481"/>
    </ligand>
</feature>
<feature type="binding site" evidence="1">
    <location>
        <position position="178"/>
    </location>
    <ligand>
        <name>dCTP</name>
        <dbReference type="ChEBI" id="CHEBI:61481"/>
    </ligand>
</feature>
<feature type="binding site" evidence="1">
    <location>
        <position position="182"/>
    </location>
    <ligand>
        <name>dCTP</name>
        <dbReference type="ChEBI" id="CHEBI:61481"/>
    </ligand>
</feature>
<comment type="function">
    <text evidence="1">Catalyzes the deamination of dCTP to dUTP.</text>
</comment>
<comment type="catalytic activity">
    <reaction evidence="1">
        <text>dCTP + H2O + H(+) = dUTP + NH4(+)</text>
        <dbReference type="Rhea" id="RHEA:22680"/>
        <dbReference type="ChEBI" id="CHEBI:15377"/>
        <dbReference type="ChEBI" id="CHEBI:15378"/>
        <dbReference type="ChEBI" id="CHEBI:28938"/>
        <dbReference type="ChEBI" id="CHEBI:61481"/>
        <dbReference type="ChEBI" id="CHEBI:61555"/>
        <dbReference type="EC" id="3.5.4.13"/>
    </reaction>
</comment>
<comment type="pathway">
    <text evidence="1">Pyrimidine metabolism; dUMP biosynthesis; dUMP from dCTP (dUTP route): step 1/2.</text>
</comment>
<comment type="subunit">
    <text evidence="1">Homotrimer.</text>
</comment>
<comment type="similarity">
    <text evidence="1">Belongs to the dCTP deaminase family.</text>
</comment>
<reference key="1">
    <citation type="journal article" date="2008" name="J. Bacteriol.">
        <title>The complete genome sequence of Actinobacillus pleuropneumoniae L20 (serotype 5b).</title>
        <authorList>
            <person name="Foote S.J."/>
            <person name="Bosse J.T."/>
            <person name="Bouevitch A.B."/>
            <person name="Langford P.R."/>
            <person name="Young N.M."/>
            <person name="Nash J.H.E."/>
        </authorList>
    </citation>
    <scope>NUCLEOTIDE SEQUENCE [LARGE SCALE GENOMIC DNA]</scope>
    <source>
        <strain>L20</strain>
    </source>
</reference>
<sequence length="194" mass="21476">MRLCDTDIERYLDEGIIEIIPRPSNEKITGATVDVRLGNSFRVFREHATPYIDLSGPREEVTAQLHKVMSEEIIIADGEAFFLHPGELALATTLESVTLPDNVVGWLDGRSSLARLGLMVHVTAHRIDPGWQGKIVLEFFNAGKLPLALRPNMAIGALSFEILSGHAAKPYNARKDAKYKNQQSAVSSRINQDD</sequence>
<evidence type="ECO:0000255" key="1">
    <source>
        <dbReference type="HAMAP-Rule" id="MF_00146"/>
    </source>
</evidence>
<evidence type="ECO:0000256" key="2">
    <source>
        <dbReference type="SAM" id="MobiDB-lite"/>
    </source>
</evidence>
<organism>
    <name type="scientific">Actinobacillus pleuropneumoniae serotype 5b (strain L20)</name>
    <dbReference type="NCBI Taxonomy" id="416269"/>
    <lineage>
        <taxon>Bacteria</taxon>
        <taxon>Pseudomonadati</taxon>
        <taxon>Pseudomonadota</taxon>
        <taxon>Gammaproteobacteria</taxon>
        <taxon>Pasteurellales</taxon>
        <taxon>Pasteurellaceae</taxon>
        <taxon>Actinobacillus</taxon>
    </lineage>
</organism>
<keyword id="KW-0378">Hydrolase</keyword>
<keyword id="KW-0546">Nucleotide metabolism</keyword>
<keyword id="KW-0547">Nucleotide-binding</keyword>
<keyword id="KW-1185">Reference proteome</keyword>
<protein>
    <recommendedName>
        <fullName evidence="1">dCTP deaminase</fullName>
        <ecNumber evidence="1">3.5.4.13</ecNumber>
    </recommendedName>
    <alternativeName>
        <fullName evidence="1">Deoxycytidine triphosphate deaminase</fullName>
    </alternativeName>
</protein>
<accession>A3N0J5</accession>
<name>DCD_ACTP2</name>